<evidence type="ECO:0000255" key="1">
    <source>
        <dbReference type="HAMAP-Rule" id="MF_00134"/>
    </source>
</evidence>
<keyword id="KW-0028">Amino-acid biosynthesis</keyword>
<keyword id="KW-0057">Aromatic amino acid biosynthesis</keyword>
<keyword id="KW-0210">Decarboxylase</keyword>
<keyword id="KW-0456">Lyase</keyword>
<keyword id="KW-1185">Reference proteome</keyword>
<keyword id="KW-0822">Tryptophan biosynthesis</keyword>
<feature type="chain" id="PRO_0000154301" description="Indole-3-glycerol phosphate synthase">
    <location>
        <begin position="1"/>
        <end position="248"/>
    </location>
</feature>
<reference key="1">
    <citation type="journal article" date="2005" name="J. Bacteriol.">
        <title>The genome of Sulfolobus acidocaldarius, a model organism of the Crenarchaeota.</title>
        <authorList>
            <person name="Chen L."/>
            <person name="Bruegger K."/>
            <person name="Skovgaard M."/>
            <person name="Redder P."/>
            <person name="She Q."/>
            <person name="Torarinsson E."/>
            <person name="Greve B."/>
            <person name="Awayez M."/>
            <person name="Zibat A."/>
            <person name="Klenk H.-P."/>
            <person name="Garrett R.A."/>
        </authorList>
    </citation>
    <scope>NUCLEOTIDE SEQUENCE [LARGE SCALE GENOMIC DNA]</scope>
    <source>
        <strain>ATCC 33909 / DSM 639 / JCM 8929 / NBRC 15157 / NCIMB 11770</strain>
    </source>
</reference>
<dbReference type="EC" id="4.1.1.48" evidence="1"/>
<dbReference type="EMBL" id="CP000077">
    <property type="protein sequence ID" value="AAY80757.1"/>
    <property type="molecule type" value="Genomic_DNA"/>
</dbReference>
<dbReference type="RefSeq" id="WP_011278259.1">
    <property type="nucleotide sequence ID" value="NC_007181.1"/>
</dbReference>
<dbReference type="SMR" id="Q4J8X3"/>
<dbReference type="STRING" id="330779.Saci_1427"/>
<dbReference type="GeneID" id="14551927"/>
<dbReference type="GeneID" id="78441772"/>
<dbReference type="KEGG" id="sai:Saci_1427"/>
<dbReference type="PATRIC" id="fig|330779.12.peg.1375"/>
<dbReference type="eggNOG" id="arCOG01088">
    <property type="taxonomic scope" value="Archaea"/>
</dbReference>
<dbReference type="HOGENOM" id="CLU_034247_0_1_2"/>
<dbReference type="UniPathway" id="UPA00035">
    <property type="reaction ID" value="UER00043"/>
</dbReference>
<dbReference type="Proteomes" id="UP000001018">
    <property type="component" value="Chromosome"/>
</dbReference>
<dbReference type="GO" id="GO:0004425">
    <property type="term" value="F:indole-3-glycerol-phosphate synthase activity"/>
    <property type="evidence" value="ECO:0007669"/>
    <property type="project" value="UniProtKB-UniRule"/>
</dbReference>
<dbReference type="GO" id="GO:0004640">
    <property type="term" value="F:phosphoribosylanthranilate isomerase activity"/>
    <property type="evidence" value="ECO:0007669"/>
    <property type="project" value="TreeGrafter"/>
</dbReference>
<dbReference type="GO" id="GO:0000162">
    <property type="term" value="P:L-tryptophan biosynthetic process"/>
    <property type="evidence" value="ECO:0007669"/>
    <property type="project" value="UniProtKB-UniRule"/>
</dbReference>
<dbReference type="CDD" id="cd00331">
    <property type="entry name" value="IGPS"/>
    <property type="match status" value="1"/>
</dbReference>
<dbReference type="Gene3D" id="3.20.20.70">
    <property type="entry name" value="Aldolase class I"/>
    <property type="match status" value="1"/>
</dbReference>
<dbReference type="HAMAP" id="MF_00134_A">
    <property type="entry name" value="IGPS_A"/>
    <property type="match status" value="1"/>
</dbReference>
<dbReference type="InterPro" id="IPR013785">
    <property type="entry name" value="Aldolase_TIM"/>
</dbReference>
<dbReference type="InterPro" id="IPR045186">
    <property type="entry name" value="Indole-3-glycerol_P_synth"/>
</dbReference>
<dbReference type="InterPro" id="IPR013798">
    <property type="entry name" value="Indole-3-glycerol_P_synth_dom"/>
</dbReference>
<dbReference type="InterPro" id="IPR001468">
    <property type="entry name" value="Indole-3-GlycerolPSynthase_CS"/>
</dbReference>
<dbReference type="InterPro" id="IPR011060">
    <property type="entry name" value="RibuloseP-bd_barrel"/>
</dbReference>
<dbReference type="NCBIfam" id="NF001374">
    <property type="entry name" value="PRK00278.2-1"/>
    <property type="match status" value="1"/>
</dbReference>
<dbReference type="PANTHER" id="PTHR22854:SF2">
    <property type="entry name" value="INDOLE-3-GLYCEROL-PHOSPHATE SYNTHASE"/>
    <property type="match status" value="1"/>
</dbReference>
<dbReference type="PANTHER" id="PTHR22854">
    <property type="entry name" value="TRYPTOPHAN BIOSYNTHESIS PROTEIN"/>
    <property type="match status" value="1"/>
</dbReference>
<dbReference type="Pfam" id="PF00218">
    <property type="entry name" value="IGPS"/>
    <property type="match status" value="1"/>
</dbReference>
<dbReference type="SUPFAM" id="SSF51366">
    <property type="entry name" value="Ribulose-phoshate binding barrel"/>
    <property type="match status" value="1"/>
</dbReference>
<dbReference type="PROSITE" id="PS00614">
    <property type="entry name" value="IGPS"/>
    <property type="match status" value="1"/>
</dbReference>
<protein>
    <recommendedName>
        <fullName evidence="1">Indole-3-glycerol phosphate synthase</fullName>
        <shortName evidence="1">IGPS</shortName>
        <ecNumber evidence="1">4.1.1.48</ecNumber>
    </recommendedName>
</protein>
<name>TRPC_SULAC</name>
<comment type="catalytic activity">
    <reaction evidence="1">
        <text>1-(2-carboxyphenylamino)-1-deoxy-D-ribulose 5-phosphate + H(+) = (1S,2R)-1-C-(indol-3-yl)glycerol 3-phosphate + CO2 + H2O</text>
        <dbReference type="Rhea" id="RHEA:23476"/>
        <dbReference type="ChEBI" id="CHEBI:15377"/>
        <dbReference type="ChEBI" id="CHEBI:15378"/>
        <dbReference type="ChEBI" id="CHEBI:16526"/>
        <dbReference type="ChEBI" id="CHEBI:58613"/>
        <dbReference type="ChEBI" id="CHEBI:58866"/>
        <dbReference type="EC" id="4.1.1.48"/>
    </reaction>
</comment>
<comment type="pathway">
    <text evidence="1">Amino-acid biosynthesis; L-tryptophan biosynthesis; L-tryptophan from chorismate: step 4/5.</text>
</comment>
<comment type="similarity">
    <text evidence="1">Belongs to the TrpC family.</text>
</comment>
<sequence length="248" mass="27856">MPRFLNGWLTDVVQASLSRPKIEKVRDRPIFSLKKSIISAKNSGLNPIIAEYKRRSPSGINVDINIIEYVKFMENNGATGISVLTEEKFFNGSYNDLELVAKNVKLPILMKDFVVSEKQIDSAYNIGADVILLIAKILTERELVSLYKYAKSYGLEAIVEISDEEDLDVALRGNYDFIGVNARNLESLEVSLDRTKKLLQMIPKDRLKIAESGISTRQDIEELRASGADAFLIGTSLLKDQNKIKELI</sequence>
<proteinExistence type="inferred from homology"/>
<organism>
    <name type="scientific">Sulfolobus acidocaldarius (strain ATCC 33909 / DSM 639 / JCM 8929 / NBRC 15157 / NCIMB 11770)</name>
    <dbReference type="NCBI Taxonomy" id="330779"/>
    <lineage>
        <taxon>Archaea</taxon>
        <taxon>Thermoproteota</taxon>
        <taxon>Thermoprotei</taxon>
        <taxon>Sulfolobales</taxon>
        <taxon>Sulfolobaceae</taxon>
        <taxon>Sulfolobus</taxon>
    </lineage>
</organism>
<gene>
    <name evidence="1" type="primary">trpC</name>
    <name type="ordered locus">Saci_1427</name>
</gene>
<accession>Q4J8X3</accession>